<reference key="1">
    <citation type="submission" date="2005-09" db="EMBL/GenBank/DDBJ databases">
        <title>Complete sequence of chromosome 2 of Rhodobacter sphaeroides 2.4.1.</title>
        <authorList>
            <person name="Copeland A."/>
            <person name="Lucas S."/>
            <person name="Lapidus A."/>
            <person name="Barry K."/>
            <person name="Detter J.C."/>
            <person name="Glavina T."/>
            <person name="Hammon N."/>
            <person name="Israni S."/>
            <person name="Pitluck S."/>
            <person name="Richardson P."/>
            <person name="Mackenzie C."/>
            <person name="Choudhary M."/>
            <person name="Larimer F."/>
            <person name="Hauser L.J."/>
            <person name="Land M."/>
            <person name="Donohue T.J."/>
            <person name="Kaplan S."/>
        </authorList>
    </citation>
    <scope>NUCLEOTIDE SEQUENCE [LARGE SCALE GENOMIC DNA]</scope>
    <source>
        <strain>ATCC 17023 / DSM 158 / JCM 6121 / CCUG 31486 / LMG 2827 / NBRC 12203 / NCIMB 8253 / ATH 2.4.1.</strain>
    </source>
</reference>
<accession>Q3IXX8</accession>
<gene>
    <name evidence="1" type="primary">proB</name>
    <name type="ordered locus">RHOS4_30380</name>
    <name type="ORF">RSP_3823</name>
</gene>
<organism>
    <name type="scientific">Cereibacter sphaeroides (strain ATCC 17023 / DSM 158 / JCM 6121 / CCUG 31486 / LMG 2827 / NBRC 12203 / NCIMB 8253 / ATH 2.4.1.)</name>
    <name type="common">Rhodobacter sphaeroides</name>
    <dbReference type="NCBI Taxonomy" id="272943"/>
    <lineage>
        <taxon>Bacteria</taxon>
        <taxon>Pseudomonadati</taxon>
        <taxon>Pseudomonadota</taxon>
        <taxon>Alphaproteobacteria</taxon>
        <taxon>Rhodobacterales</taxon>
        <taxon>Paracoccaceae</taxon>
        <taxon>Cereibacter</taxon>
    </lineage>
</organism>
<dbReference type="EC" id="2.7.2.11" evidence="1"/>
<dbReference type="EMBL" id="CP000144">
    <property type="protein sequence ID" value="ABA80606.1"/>
    <property type="molecule type" value="Genomic_DNA"/>
</dbReference>
<dbReference type="RefSeq" id="WP_011338952.1">
    <property type="nucleotide sequence ID" value="NZ_CP030272.1"/>
</dbReference>
<dbReference type="RefSeq" id="YP_354507.1">
    <property type="nucleotide sequence ID" value="NC_007494.2"/>
</dbReference>
<dbReference type="SMR" id="Q3IXX8"/>
<dbReference type="STRING" id="272943.RSP_3823"/>
<dbReference type="EnsemblBacteria" id="ABA80606">
    <property type="protein sequence ID" value="ABA80606"/>
    <property type="gene ID" value="RSP_3823"/>
</dbReference>
<dbReference type="GeneID" id="3721404"/>
<dbReference type="KEGG" id="rsp:RSP_3823"/>
<dbReference type="PATRIC" id="fig|272943.9.peg.3409"/>
<dbReference type="eggNOG" id="COG0263">
    <property type="taxonomic scope" value="Bacteria"/>
</dbReference>
<dbReference type="OrthoDB" id="9804434at2"/>
<dbReference type="PhylomeDB" id="Q3IXX8"/>
<dbReference type="UniPathway" id="UPA00098">
    <property type="reaction ID" value="UER00359"/>
</dbReference>
<dbReference type="Proteomes" id="UP000002703">
    <property type="component" value="Chromosome 2"/>
</dbReference>
<dbReference type="GO" id="GO:0005829">
    <property type="term" value="C:cytosol"/>
    <property type="evidence" value="ECO:0007669"/>
    <property type="project" value="TreeGrafter"/>
</dbReference>
<dbReference type="GO" id="GO:0005524">
    <property type="term" value="F:ATP binding"/>
    <property type="evidence" value="ECO:0007669"/>
    <property type="project" value="UniProtKB-KW"/>
</dbReference>
<dbReference type="GO" id="GO:0004349">
    <property type="term" value="F:glutamate 5-kinase activity"/>
    <property type="evidence" value="ECO:0007669"/>
    <property type="project" value="UniProtKB-UniRule"/>
</dbReference>
<dbReference type="GO" id="GO:0003723">
    <property type="term" value="F:RNA binding"/>
    <property type="evidence" value="ECO:0007669"/>
    <property type="project" value="InterPro"/>
</dbReference>
<dbReference type="GO" id="GO:0055129">
    <property type="term" value="P:L-proline biosynthetic process"/>
    <property type="evidence" value="ECO:0007669"/>
    <property type="project" value="UniProtKB-UniRule"/>
</dbReference>
<dbReference type="CDD" id="cd04242">
    <property type="entry name" value="AAK_G5K_ProB"/>
    <property type="match status" value="1"/>
</dbReference>
<dbReference type="CDD" id="cd21157">
    <property type="entry name" value="PUA_G5K"/>
    <property type="match status" value="1"/>
</dbReference>
<dbReference type="FunFam" id="2.30.130.10:FF:000007">
    <property type="entry name" value="Glutamate 5-kinase"/>
    <property type="match status" value="1"/>
</dbReference>
<dbReference type="FunFam" id="3.40.1160.10:FF:000018">
    <property type="entry name" value="Glutamate 5-kinase"/>
    <property type="match status" value="1"/>
</dbReference>
<dbReference type="Gene3D" id="3.40.1160.10">
    <property type="entry name" value="Acetylglutamate kinase-like"/>
    <property type="match status" value="2"/>
</dbReference>
<dbReference type="Gene3D" id="2.30.130.10">
    <property type="entry name" value="PUA domain"/>
    <property type="match status" value="1"/>
</dbReference>
<dbReference type="HAMAP" id="MF_00456">
    <property type="entry name" value="ProB"/>
    <property type="match status" value="1"/>
</dbReference>
<dbReference type="InterPro" id="IPR036393">
    <property type="entry name" value="AceGlu_kinase-like_sf"/>
</dbReference>
<dbReference type="InterPro" id="IPR001048">
    <property type="entry name" value="Asp/Glu/Uridylate_kinase"/>
</dbReference>
<dbReference type="InterPro" id="IPR041739">
    <property type="entry name" value="G5K_ProB"/>
</dbReference>
<dbReference type="InterPro" id="IPR001057">
    <property type="entry name" value="Glu/AcGlu_kinase"/>
</dbReference>
<dbReference type="InterPro" id="IPR011529">
    <property type="entry name" value="Glu_5kinase"/>
</dbReference>
<dbReference type="InterPro" id="IPR005715">
    <property type="entry name" value="Glu_5kinase/COase_Synthase"/>
</dbReference>
<dbReference type="InterPro" id="IPR019797">
    <property type="entry name" value="Glutamate_5-kinase_CS"/>
</dbReference>
<dbReference type="InterPro" id="IPR002478">
    <property type="entry name" value="PUA"/>
</dbReference>
<dbReference type="InterPro" id="IPR015947">
    <property type="entry name" value="PUA-like_sf"/>
</dbReference>
<dbReference type="InterPro" id="IPR036974">
    <property type="entry name" value="PUA_sf"/>
</dbReference>
<dbReference type="NCBIfam" id="TIGR01027">
    <property type="entry name" value="proB"/>
    <property type="match status" value="1"/>
</dbReference>
<dbReference type="PANTHER" id="PTHR43654">
    <property type="entry name" value="GLUTAMATE 5-KINASE"/>
    <property type="match status" value="1"/>
</dbReference>
<dbReference type="PANTHER" id="PTHR43654:SF1">
    <property type="entry name" value="ISOPENTENYL PHOSPHATE KINASE"/>
    <property type="match status" value="1"/>
</dbReference>
<dbReference type="Pfam" id="PF00696">
    <property type="entry name" value="AA_kinase"/>
    <property type="match status" value="1"/>
</dbReference>
<dbReference type="Pfam" id="PF01472">
    <property type="entry name" value="PUA"/>
    <property type="match status" value="1"/>
</dbReference>
<dbReference type="PIRSF" id="PIRSF000729">
    <property type="entry name" value="GK"/>
    <property type="match status" value="1"/>
</dbReference>
<dbReference type="PRINTS" id="PR00474">
    <property type="entry name" value="GLU5KINASE"/>
</dbReference>
<dbReference type="SMART" id="SM00359">
    <property type="entry name" value="PUA"/>
    <property type="match status" value="1"/>
</dbReference>
<dbReference type="SUPFAM" id="SSF53633">
    <property type="entry name" value="Carbamate kinase-like"/>
    <property type="match status" value="1"/>
</dbReference>
<dbReference type="SUPFAM" id="SSF88697">
    <property type="entry name" value="PUA domain-like"/>
    <property type="match status" value="1"/>
</dbReference>
<dbReference type="PROSITE" id="PS00902">
    <property type="entry name" value="GLUTAMATE_5_KINASE"/>
    <property type="match status" value="1"/>
</dbReference>
<dbReference type="PROSITE" id="PS50890">
    <property type="entry name" value="PUA"/>
    <property type="match status" value="1"/>
</dbReference>
<comment type="function">
    <text evidence="1">Catalyzes the transfer of a phosphate group to glutamate to form L-glutamate 5-phosphate.</text>
</comment>
<comment type="catalytic activity">
    <reaction evidence="1">
        <text>L-glutamate + ATP = L-glutamyl 5-phosphate + ADP</text>
        <dbReference type="Rhea" id="RHEA:14877"/>
        <dbReference type="ChEBI" id="CHEBI:29985"/>
        <dbReference type="ChEBI" id="CHEBI:30616"/>
        <dbReference type="ChEBI" id="CHEBI:58274"/>
        <dbReference type="ChEBI" id="CHEBI:456216"/>
        <dbReference type="EC" id="2.7.2.11"/>
    </reaction>
</comment>
<comment type="pathway">
    <text evidence="1">Amino-acid biosynthesis; L-proline biosynthesis; L-glutamate 5-semialdehyde from L-glutamate: step 1/2.</text>
</comment>
<comment type="subcellular location">
    <subcellularLocation>
        <location evidence="1">Cytoplasm</location>
    </subcellularLocation>
</comment>
<comment type="similarity">
    <text evidence="1">Belongs to the glutamate 5-kinase family.</text>
</comment>
<feature type="chain" id="PRO_0000230063" description="Glutamate 5-kinase">
    <location>
        <begin position="1"/>
        <end position="370"/>
    </location>
</feature>
<feature type="domain" description="PUA" evidence="1">
    <location>
        <begin position="280"/>
        <end position="357"/>
    </location>
</feature>
<feature type="binding site" evidence="1">
    <location>
        <position position="17"/>
    </location>
    <ligand>
        <name>ATP</name>
        <dbReference type="ChEBI" id="CHEBI:30616"/>
    </ligand>
</feature>
<feature type="binding site" evidence="1">
    <location>
        <position position="56"/>
    </location>
    <ligand>
        <name>substrate</name>
    </ligand>
</feature>
<feature type="binding site" evidence="1">
    <location>
        <position position="143"/>
    </location>
    <ligand>
        <name>substrate</name>
    </ligand>
</feature>
<feature type="binding site" evidence="1">
    <location>
        <position position="155"/>
    </location>
    <ligand>
        <name>substrate</name>
    </ligand>
</feature>
<feature type="binding site" evidence="1">
    <location>
        <begin position="175"/>
        <end position="176"/>
    </location>
    <ligand>
        <name>ATP</name>
        <dbReference type="ChEBI" id="CHEBI:30616"/>
    </ligand>
</feature>
<protein>
    <recommendedName>
        <fullName evidence="1">Glutamate 5-kinase</fullName>
        <ecNumber evidence="1">2.7.2.11</ecNumber>
    </recommendedName>
    <alternativeName>
        <fullName evidence="1">Gamma-glutamyl kinase</fullName>
        <shortName evidence="1">GK</shortName>
    </alternativeName>
</protein>
<name>PROB_CERS4</name>
<sequence>MPLQAPDIRSAKRLVVKIGSALLVDGEGLRRQWLSALALDVAEARTRGTQVILVSSGSIALGRRVLHLPPGPLALEQSQAAAAVGQIRLARAYEEVLAPHGITTAQVLVTLEDTEDRRRYLNSRATMETLLGLGTVPIVNENDTVATDEIRFGDNDRLAAQIAVTVGADQLVLLSDVDGFYSANPKEDPTAERFDLVETITPALEAMAGDPVSGLSKGGMKTKIMAAKTAVAGGCAMAITEGSAMRPLKALEQGAARTWFVAQGDPQAARKRWINAMKPRGTIRVDAGAVQALQAGKSLLPAGVVAVEGNFGRGDPVEIAGPMGEVLGRGLTRYTAVEAVQIAGHRSAEIVAILGYSGRAALIHRDDMVI</sequence>
<proteinExistence type="inferred from homology"/>
<keyword id="KW-0028">Amino-acid biosynthesis</keyword>
<keyword id="KW-0067">ATP-binding</keyword>
<keyword id="KW-0963">Cytoplasm</keyword>
<keyword id="KW-0418">Kinase</keyword>
<keyword id="KW-0547">Nucleotide-binding</keyword>
<keyword id="KW-0641">Proline biosynthesis</keyword>
<keyword id="KW-1185">Reference proteome</keyword>
<keyword id="KW-0808">Transferase</keyword>
<evidence type="ECO:0000255" key="1">
    <source>
        <dbReference type="HAMAP-Rule" id="MF_00456"/>
    </source>
</evidence>